<proteinExistence type="evidence at protein level"/>
<organism>
    <name type="scientific">Saccharomyces cerevisiae (strain ATCC 204508 / S288c)</name>
    <name type="common">Baker's yeast</name>
    <dbReference type="NCBI Taxonomy" id="559292"/>
    <lineage>
        <taxon>Eukaryota</taxon>
        <taxon>Fungi</taxon>
        <taxon>Dikarya</taxon>
        <taxon>Ascomycota</taxon>
        <taxon>Saccharomycotina</taxon>
        <taxon>Saccharomycetes</taxon>
        <taxon>Saccharomycetales</taxon>
        <taxon>Saccharomycetaceae</taxon>
        <taxon>Saccharomyces</taxon>
    </lineage>
</organism>
<comment type="function">
    <text evidence="9 10">Component of the mitochondrial ribosome (mitoribosome), a dedicated translation machinery responsible for the synthesis of mitochondrial genome-encoded proteins, including at least some of the essential transmembrane subunits of the mitochondrial respiratory chain. The mitoribosomes are attached to the mitochondrial inner membrane and translation products are cotranslationally integrated into the membrane.</text>
</comment>
<comment type="subunit">
    <text evidence="4 5">Component of the mitochondrial large ribosomal subunit (mt-LSU). Mature yeast 74S mitochondrial ribosomes consist of a small (37S) and a large (54S) subunit. The 37S small subunit contains a 15S ribosomal RNA (15S mt-rRNA) and 34 different proteins. The 54S large subunit contains a 21S rRNA (21S mt-rRNA) and 46 different proteins.</text>
</comment>
<comment type="subcellular location">
    <subcellularLocation>
        <location evidence="1 3">Mitochondrion</location>
    </subcellularLocation>
    <text evidence="6">Mitoribosomes are tethered to the mitochondrial inner membrane and spatially aligned with the membrane insertion machinery through two distinct membrane contact sites, formed by the 21S rRNA expansion segment 96-ES1 and the inner membrane protein MBA1.</text>
</comment>
<comment type="miscellaneous">
    <text evidence="2">Present with 6300 molecules/cell in log phase SD medium.</text>
</comment>
<comment type="similarity">
    <text evidence="8">Belongs to the mitochondrion-specific ribosomal protein mL40 family.</text>
</comment>
<gene>
    <name type="primary">MRPL28</name>
    <name type="ordered locus">YDR462W</name>
    <name type="ORF">D8035.6</name>
</gene>
<sequence>MLAQTFKKPHRAVLEQVSGTTVFIRNKRTKSKSSLSPLAQRVVTQLSVMSASRKQPKLLKLAREDLIKHQTIEKCWSIYQQQQRERRNLQLELQYKSIERSMNLLQELSPRLFEAANASEKGKRFPMEMKVPTDFPPNTLWHYNFRK</sequence>
<reference key="1">
    <citation type="journal article" date="1992" name="Mol. Cell. Biol.">
        <title>STP1, a gene involved in pre-tRNA processing, encodes a nuclear protein containing zinc finger motifs.</title>
        <authorList>
            <person name="Wang S.S."/>
            <person name="Stanford D.R."/>
            <person name="Silvers C.D."/>
            <person name="Hopper A.K."/>
        </authorList>
    </citation>
    <scope>NUCLEOTIDE SEQUENCE [GENOMIC DNA]</scope>
</reference>
<reference key="2">
    <citation type="journal article" date="1997" name="Nature">
        <title>The nucleotide sequence of Saccharomyces cerevisiae chromosome IV.</title>
        <authorList>
            <person name="Jacq C."/>
            <person name="Alt-Moerbe J."/>
            <person name="Andre B."/>
            <person name="Arnold W."/>
            <person name="Bahr A."/>
            <person name="Ballesta J.P.G."/>
            <person name="Bargues M."/>
            <person name="Baron L."/>
            <person name="Becker A."/>
            <person name="Biteau N."/>
            <person name="Bloecker H."/>
            <person name="Blugeon C."/>
            <person name="Boskovic J."/>
            <person name="Brandt P."/>
            <person name="Brueckner M."/>
            <person name="Buitrago M.J."/>
            <person name="Coster F."/>
            <person name="Delaveau T."/>
            <person name="del Rey F."/>
            <person name="Dujon B."/>
            <person name="Eide L.G."/>
            <person name="Garcia-Cantalejo J.M."/>
            <person name="Goffeau A."/>
            <person name="Gomez-Peris A."/>
            <person name="Granotier C."/>
            <person name="Hanemann V."/>
            <person name="Hankeln T."/>
            <person name="Hoheisel J.D."/>
            <person name="Jaeger W."/>
            <person name="Jimenez A."/>
            <person name="Jonniaux J.-L."/>
            <person name="Kraemer C."/>
            <person name="Kuester H."/>
            <person name="Laamanen P."/>
            <person name="Legros Y."/>
            <person name="Louis E.J."/>
            <person name="Moeller-Rieker S."/>
            <person name="Monnet A."/>
            <person name="Moro M."/>
            <person name="Mueller-Auer S."/>
            <person name="Nussbaumer B."/>
            <person name="Paricio N."/>
            <person name="Paulin L."/>
            <person name="Perea J."/>
            <person name="Perez-Alonso M."/>
            <person name="Perez-Ortin J.E."/>
            <person name="Pohl T.M."/>
            <person name="Prydz H."/>
            <person name="Purnelle B."/>
            <person name="Rasmussen S.W."/>
            <person name="Remacha M.A."/>
            <person name="Revuelta J.L."/>
            <person name="Rieger M."/>
            <person name="Salom D."/>
            <person name="Saluz H.P."/>
            <person name="Saiz J.E."/>
            <person name="Saren A.-M."/>
            <person name="Schaefer M."/>
            <person name="Scharfe M."/>
            <person name="Schmidt E.R."/>
            <person name="Schneider C."/>
            <person name="Scholler P."/>
            <person name="Schwarz S."/>
            <person name="Soler-Mira A."/>
            <person name="Urrestarazu L.A."/>
            <person name="Verhasselt P."/>
            <person name="Vissers S."/>
            <person name="Voet M."/>
            <person name="Volckaert G."/>
            <person name="Wagner G."/>
            <person name="Wambutt R."/>
            <person name="Wedler E."/>
            <person name="Wedler H."/>
            <person name="Woelfl S."/>
            <person name="Harris D.E."/>
            <person name="Bowman S."/>
            <person name="Brown D."/>
            <person name="Churcher C.M."/>
            <person name="Connor R."/>
            <person name="Dedman K."/>
            <person name="Gentles S."/>
            <person name="Hamlin N."/>
            <person name="Hunt S."/>
            <person name="Jones L."/>
            <person name="McDonald S."/>
            <person name="Murphy L.D."/>
            <person name="Niblett D."/>
            <person name="Odell C."/>
            <person name="Oliver K."/>
            <person name="Rajandream M.A."/>
            <person name="Richards C."/>
            <person name="Shore L."/>
            <person name="Walsh S.V."/>
            <person name="Barrell B.G."/>
            <person name="Dietrich F.S."/>
            <person name="Mulligan J.T."/>
            <person name="Allen E."/>
            <person name="Araujo R."/>
            <person name="Aviles E."/>
            <person name="Berno A."/>
            <person name="Carpenter J."/>
            <person name="Chen E."/>
            <person name="Cherry J.M."/>
            <person name="Chung E."/>
            <person name="Duncan M."/>
            <person name="Hunicke-Smith S."/>
            <person name="Hyman R.W."/>
            <person name="Komp C."/>
            <person name="Lashkari D."/>
            <person name="Lew H."/>
            <person name="Lin D."/>
            <person name="Mosedale D."/>
            <person name="Nakahara K."/>
            <person name="Namath A."/>
            <person name="Oefner P."/>
            <person name="Oh C."/>
            <person name="Petel F.X."/>
            <person name="Roberts D."/>
            <person name="Schramm S."/>
            <person name="Schroeder M."/>
            <person name="Shogren T."/>
            <person name="Shroff N."/>
            <person name="Winant A."/>
            <person name="Yelton M.A."/>
            <person name="Botstein D."/>
            <person name="Davis R.W."/>
            <person name="Johnston M."/>
            <person name="Andrews S."/>
            <person name="Brinkman R."/>
            <person name="Cooper J."/>
            <person name="Ding H."/>
            <person name="Du Z."/>
            <person name="Favello A."/>
            <person name="Fulton L."/>
            <person name="Gattung S."/>
            <person name="Greco T."/>
            <person name="Hallsworth K."/>
            <person name="Hawkins J."/>
            <person name="Hillier L.W."/>
            <person name="Jier M."/>
            <person name="Johnson D."/>
            <person name="Johnston L."/>
            <person name="Kirsten J."/>
            <person name="Kucaba T."/>
            <person name="Langston Y."/>
            <person name="Latreille P."/>
            <person name="Le T."/>
            <person name="Mardis E."/>
            <person name="Menezes S."/>
            <person name="Miller N."/>
            <person name="Nhan M."/>
            <person name="Pauley A."/>
            <person name="Peluso D."/>
            <person name="Rifkin L."/>
            <person name="Riles L."/>
            <person name="Taich A."/>
            <person name="Trevaskis E."/>
            <person name="Vignati D."/>
            <person name="Wilcox L."/>
            <person name="Wohldman P."/>
            <person name="Vaudin M."/>
            <person name="Wilson R."/>
            <person name="Waterston R."/>
            <person name="Albermann K."/>
            <person name="Hani J."/>
            <person name="Heumann K."/>
            <person name="Kleine K."/>
            <person name="Mewes H.-W."/>
            <person name="Zollner A."/>
            <person name="Zaccaria P."/>
        </authorList>
    </citation>
    <scope>NUCLEOTIDE SEQUENCE [LARGE SCALE GENOMIC DNA]</scope>
    <source>
        <strain>ATCC 204508 / S288c</strain>
    </source>
</reference>
<reference key="3">
    <citation type="journal article" date="2014" name="G3 (Bethesda)">
        <title>The reference genome sequence of Saccharomyces cerevisiae: Then and now.</title>
        <authorList>
            <person name="Engel S.R."/>
            <person name="Dietrich F.S."/>
            <person name="Fisk D.G."/>
            <person name="Binkley G."/>
            <person name="Balakrishnan R."/>
            <person name="Costanzo M.C."/>
            <person name="Dwight S.S."/>
            <person name="Hitz B.C."/>
            <person name="Karra K."/>
            <person name="Nash R.S."/>
            <person name="Weng S."/>
            <person name="Wong E.D."/>
            <person name="Lloyd P."/>
            <person name="Skrzypek M.S."/>
            <person name="Miyasato S.R."/>
            <person name="Simison M."/>
            <person name="Cherry J.M."/>
        </authorList>
    </citation>
    <scope>GENOME REANNOTATION</scope>
    <source>
        <strain>ATCC 204508 / S288c</strain>
    </source>
</reference>
<reference key="4">
    <citation type="journal article" date="2007" name="Genome Res.">
        <title>Approaching a complete repository of sequence-verified protein-encoding clones for Saccharomyces cerevisiae.</title>
        <authorList>
            <person name="Hu Y."/>
            <person name="Rolfs A."/>
            <person name="Bhullar B."/>
            <person name="Murthy T.V.S."/>
            <person name="Zhu C."/>
            <person name="Berger M.F."/>
            <person name="Camargo A.A."/>
            <person name="Kelley F."/>
            <person name="McCarron S."/>
            <person name="Jepson D."/>
            <person name="Richardson A."/>
            <person name="Raphael J."/>
            <person name="Moreira D."/>
            <person name="Taycher E."/>
            <person name="Zuo D."/>
            <person name="Mohr S."/>
            <person name="Kane M.F."/>
            <person name="Williamson J."/>
            <person name="Simpson A.J.G."/>
            <person name="Bulyk M.L."/>
            <person name="Harlow E."/>
            <person name="Marsischky G."/>
            <person name="Kolodner R.D."/>
            <person name="LaBaer J."/>
        </authorList>
    </citation>
    <scope>NUCLEOTIDE SEQUENCE [GENOMIC DNA]</scope>
    <source>
        <strain>ATCC 204508 / S288c</strain>
    </source>
</reference>
<reference key="5">
    <citation type="journal article" date="1991" name="FEBS Lett.">
        <title>Extended N-terminal sequencing of proteins of the large ribosomal subunit from yeast mitochondria.</title>
        <authorList>
            <person name="Grohmann L."/>
            <person name="Graack H.-R."/>
            <person name="Kruft V."/>
            <person name="Choli T."/>
            <person name="Goldschmidt-Reisin S."/>
            <person name="Kitakawa M."/>
        </authorList>
    </citation>
    <scope>PROTEIN SEQUENCE OF 27-53</scope>
    <scope>SUBUNIT</scope>
    <source>
        <strain>07173</strain>
    </source>
</reference>
<reference key="6">
    <citation type="journal article" date="2003" name="Nature">
        <title>Global analysis of protein localization in budding yeast.</title>
        <authorList>
            <person name="Huh W.-K."/>
            <person name="Falvo J.V."/>
            <person name="Gerke L.C."/>
            <person name="Carroll A.S."/>
            <person name="Howson R.W."/>
            <person name="Weissman J.S."/>
            <person name="O'Shea E.K."/>
        </authorList>
    </citation>
    <scope>SUBCELLULAR LOCATION [LARGE SCALE ANALYSIS]</scope>
</reference>
<reference key="7">
    <citation type="journal article" date="2003" name="Nature">
        <title>Global analysis of protein expression in yeast.</title>
        <authorList>
            <person name="Ghaemmaghami S."/>
            <person name="Huh W.-K."/>
            <person name="Bower K."/>
            <person name="Howson R.W."/>
            <person name="Belle A."/>
            <person name="Dephoure N."/>
            <person name="O'Shea E.K."/>
            <person name="Weissman J.S."/>
        </authorList>
    </citation>
    <scope>LEVEL OF PROTEIN EXPRESSION [LARGE SCALE ANALYSIS]</scope>
</reference>
<reference key="8">
    <citation type="journal article" date="2003" name="Proc. Natl. Acad. Sci. U.S.A.">
        <title>The proteome of Saccharomyces cerevisiae mitochondria.</title>
        <authorList>
            <person name="Sickmann A."/>
            <person name="Reinders J."/>
            <person name="Wagner Y."/>
            <person name="Joppich C."/>
            <person name="Zahedi R.P."/>
            <person name="Meyer H.E."/>
            <person name="Schoenfisch B."/>
            <person name="Perschil I."/>
            <person name="Chacinska A."/>
            <person name="Guiard B."/>
            <person name="Rehling P."/>
            <person name="Pfanner N."/>
            <person name="Meisinger C."/>
        </authorList>
    </citation>
    <scope>SUBCELLULAR LOCATION [LARGE SCALE ANALYSIS]</scope>
    <source>
        <strain>ATCC 76625 / YPH499</strain>
    </source>
</reference>
<reference key="9">
    <citation type="journal article" date="2015" name="Nat. Commun.">
        <title>Organization of the mitochondrial translation machinery studied in situ by cryoelectron tomography.</title>
        <authorList>
            <person name="Pfeffer S."/>
            <person name="Woellhaf M.W."/>
            <person name="Herrmann J.M."/>
            <person name="Forster F."/>
        </authorList>
    </citation>
    <scope>SUBCELLULAR LOCATION</scope>
</reference>
<reference key="10">
    <citation type="journal article" date="2014" name="Science">
        <title>Structure of the yeast mitochondrial large ribosomal subunit.</title>
        <authorList>
            <person name="Amunts A."/>
            <person name="Brown A."/>
            <person name="Bai X.C."/>
            <person name="Llacer J.L."/>
            <person name="Hussain T."/>
            <person name="Emsley P."/>
            <person name="Long F."/>
            <person name="Murshudov G."/>
            <person name="Scheres S.H."/>
            <person name="Ramakrishnan V."/>
        </authorList>
    </citation>
    <scope>STRUCTURE BY ELECTRON MICROSCOPY (3.20 ANGSTROMS)</scope>
    <scope>SUBUNIT</scope>
</reference>
<dbReference type="EMBL" id="M88597">
    <property type="protein sequence ID" value="AAA35123.1"/>
    <property type="molecule type" value="Genomic_DNA"/>
</dbReference>
<dbReference type="EMBL" id="U33050">
    <property type="protein sequence ID" value="AAB64900.1"/>
    <property type="molecule type" value="Genomic_DNA"/>
</dbReference>
<dbReference type="EMBL" id="AY693200">
    <property type="protein sequence ID" value="AAT93219.1"/>
    <property type="molecule type" value="Genomic_DNA"/>
</dbReference>
<dbReference type="EMBL" id="BK006938">
    <property type="protein sequence ID" value="DAA12297.1"/>
    <property type="molecule type" value="Genomic_DNA"/>
</dbReference>
<dbReference type="PIR" id="S31243">
    <property type="entry name" value="S31243"/>
</dbReference>
<dbReference type="RefSeq" id="NP_010750.1">
    <property type="nucleotide sequence ID" value="NM_001180770.1"/>
</dbReference>
<dbReference type="PDB" id="3J6B">
    <property type="method" value="EM"/>
    <property type="resolution" value="3.20 A"/>
    <property type="chains" value="2=1-147"/>
</dbReference>
<dbReference type="PDB" id="5MRC">
    <property type="method" value="EM"/>
    <property type="resolution" value="3.25 A"/>
    <property type="chains" value="2=34-146"/>
</dbReference>
<dbReference type="PDB" id="5MRE">
    <property type="method" value="EM"/>
    <property type="resolution" value="3.75 A"/>
    <property type="chains" value="2=34-146"/>
</dbReference>
<dbReference type="PDB" id="5MRF">
    <property type="method" value="EM"/>
    <property type="resolution" value="4.97 A"/>
    <property type="chains" value="2=34-146"/>
</dbReference>
<dbReference type="PDBsum" id="3J6B"/>
<dbReference type="PDBsum" id="5MRC"/>
<dbReference type="PDBsum" id="5MRE"/>
<dbReference type="PDBsum" id="5MRF"/>
<dbReference type="EMDB" id="EMD-3551"/>
<dbReference type="EMDB" id="EMD-3552"/>
<dbReference type="EMDB" id="EMD-3553"/>
<dbReference type="SMR" id="P36527"/>
<dbReference type="BioGRID" id="32516">
    <property type="interactions" value="155"/>
</dbReference>
<dbReference type="ComplexPortal" id="CPX-1602">
    <property type="entry name" value="54S mitochondrial large ribosomal subunit"/>
</dbReference>
<dbReference type="DIP" id="DIP-6805N"/>
<dbReference type="FunCoup" id="P36527">
    <property type="interactions" value="320"/>
</dbReference>
<dbReference type="IntAct" id="P36527">
    <property type="interactions" value="64"/>
</dbReference>
<dbReference type="MINT" id="P36527"/>
<dbReference type="STRING" id="4932.YDR462W"/>
<dbReference type="iPTMnet" id="P36527"/>
<dbReference type="PaxDb" id="4932-YDR462W"/>
<dbReference type="PeptideAtlas" id="P36527"/>
<dbReference type="EnsemblFungi" id="YDR462W_mRNA">
    <property type="protein sequence ID" value="YDR462W"/>
    <property type="gene ID" value="YDR462W"/>
</dbReference>
<dbReference type="GeneID" id="852073"/>
<dbReference type="KEGG" id="sce:YDR462W"/>
<dbReference type="AGR" id="SGD:S000002870"/>
<dbReference type="SGD" id="S000002870">
    <property type="gene designation" value="MRPL28"/>
</dbReference>
<dbReference type="VEuPathDB" id="FungiDB:YDR462W"/>
<dbReference type="eggNOG" id="KOG4778">
    <property type="taxonomic scope" value="Eukaryota"/>
</dbReference>
<dbReference type="HOGENOM" id="CLU_126124_0_0_1"/>
<dbReference type="InParanoid" id="P36527"/>
<dbReference type="OMA" id="DYAYKAP"/>
<dbReference type="OrthoDB" id="2098203at2759"/>
<dbReference type="BioCyc" id="YEAST:G3O-29990-MONOMER"/>
<dbReference type="BioGRID-ORCS" id="852073">
    <property type="hits" value="8 hits in 10 CRISPR screens"/>
</dbReference>
<dbReference type="PRO" id="PR:P36527"/>
<dbReference type="Proteomes" id="UP000002311">
    <property type="component" value="Chromosome IV"/>
</dbReference>
<dbReference type="RNAct" id="P36527">
    <property type="molecule type" value="protein"/>
</dbReference>
<dbReference type="GO" id="GO:0005743">
    <property type="term" value="C:mitochondrial inner membrane"/>
    <property type="evidence" value="ECO:0000303"/>
    <property type="project" value="ComplexPortal"/>
</dbReference>
<dbReference type="GO" id="GO:0005762">
    <property type="term" value="C:mitochondrial large ribosomal subunit"/>
    <property type="evidence" value="ECO:0000314"/>
    <property type="project" value="SGD"/>
</dbReference>
<dbReference type="GO" id="GO:0005739">
    <property type="term" value="C:mitochondrion"/>
    <property type="evidence" value="ECO:0007005"/>
    <property type="project" value="SGD"/>
</dbReference>
<dbReference type="GO" id="GO:0003735">
    <property type="term" value="F:structural constituent of ribosome"/>
    <property type="evidence" value="ECO:0000314"/>
    <property type="project" value="SGD"/>
</dbReference>
<dbReference type="GO" id="GO:0032543">
    <property type="term" value="P:mitochondrial translation"/>
    <property type="evidence" value="ECO:0000303"/>
    <property type="project" value="ComplexPortal"/>
</dbReference>
<dbReference type="FunFam" id="6.10.250.3440:FF:000001">
    <property type="entry name" value="Mitochondrial ribosomal protein L40"/>
    <property type="match status" value="1"/>
</dbReference>
<dbReference type="Gene3D" id="6.10.250.3440">
    <property type="match status" value="1"/>
</dbReference>
<dbReference type="InterPro" id="IPR019192">
    <property type="entry name" value="Ribosomal_mL40"/>
</dbReference>
<dbReference type="InterPro" id="IPR042831">
    <property type="entry name" value="Ribosomal_mL40_fung"/>
</dbReference>
<dbReference type="PANTHER" id="PTHR39150">
    <property type="entry name" value="54S RIBOSOMAL PROTEIN L28, MITOCHONDRIAL"/>
    <property type="match status" value="1"/>
</dbReference>
<dbReference type="PANTHER" id="PTHR39150:SF1">
    <property type="entry name" value="LARGE RIBOSOMAL SUBUNIT PROTEIN ML40"/>
    <property type="match status" value="1"/>
</dbReference>
<dbReference type="Pfam" id="PF09812">
    <property type="entry name" value="MRP-L28"/>
    <property type="match status" value="1"/>
</dbReference>
<protein>
    <recommendedName>
        <fullName evidence="7">Large ribosomal subunit protein mL40</fullName>
    </recommendedName>
    <alternativeName>
        <fullName>54S ribosomal protein L28, mitochondrial</fullName>
    </alternativeName>
    <alternativeName>
        <fullName>YmL28</fullName>
    </alternativeName>
</protein>
<evidence type="ECO:0000269" key="1">
    <source>
    </source>
</evidence>
<evidence type="ECO:0000269" key="2">
    <source>
    </source>
</evidence>
<evidence type="ECO:0000269" key="3">
    <source>
    </source>
</evidence>
<evidence type="ECO:0000269" key="4">
    <source>
    </source>
</evidence>
<evidence type="ECO:0000269" key="5">
    <source>
    </source>
</evidence>
<evidence type="ECO:0000269" key="6">
    <source>
    </source>
</evidence>
<evidence type="ECO:0000303" key="7">
    <source>
    </source>
</evidence>
<evidence type="ECO:0000305" key="8"/>
<evidence type="ECO:0000305" key="9">
    <source>
    </source>
</evidence>
<evidence type="ECO:0000305" key="10">
    <source>
    </source>
</evidence>
<accession>P36527</accession>
<accession>D6VT87</accession>
<accession>Q00949</accession>
<name>RM28_YEAST</name>
<feature type="transit peptide" description="Mitochondrion" evidence="4">
    <location>
        <begin position="1"/>
        <end position="26"/>
    </location>
</feature>
<feature type="chain" id="PRO_0000030575" description="Large ribosomal subunit protein mL40">
    <location>
        <begin position="27"/>
        <end position="147"/>
    </location>
</feature>
<feature type="sequence conflict" description="In Ref. 5; AA sequence." evidence="8" ref="5">
    <original>RT</original>
    <variation>IF</variation>
    <location>
        <begin position="28"/>
        <end position="29"/>
    </location>
</feature>
<feature type="sequence conflict" description="In Ref. 5; AA sequence." evidence="8" ref="5">
    <original>SSLSP</original>
    <variation>VILVI</variation>
    <location>
        <begin position="33"/>
        <end position="37"/>
    </location>
</feature>
<feature type="sequence conflict" description="In Ref. 5; AA sequence." evidence="8" ref="5">
    <original>M</original>
    <variation>K</variation>
    <location>
        <position position="49"/>
    </location>
</feature>
<feature type="sequence conflict" description="In Ref. 5; AA sequence." evidence="8" ref="5">
    <original>R</original>
    <variation>P</variation>
    <location>
        <position position="53"/>
    </location>
</feature>
<keyword id="KW-0002">3D-structure</keyword>
<keyword id="KW-0903">Direct protein sequencing</keyword>
<keyword id="KW-0496">Mitochondrion</keyword>
<keyword id="KW-1185">Reference proteome</keyword>
<keyword id="KW-0687">Ribonucleoprotein</keyword>
<keyword id="KW-0689">Ribosomal protein</keyword>
<keyword id="KW-0809">Transit peptide</keyword>